<organism>
    <name type="scientific">Ovis aries</name>
    <name type="common">Sheep</name>
    <dbReference type="NCBI Taxonomy" id="9940"/>
    <lineage>
        <taxon>Eukaryota</taxon>
        <taxon>Metazoa</taxon>
        <taxon>Chordata</taxon>
        <taxon>Craniata</taxon>
        <taxon>Vertebrata</taxon>
        <taxon>Euteleostomi</taxon>
        <taxon>Mammalia</taxon>
        <taxon>Eutheria</taxon>
        <taxon>Laurasiatheria</taxon>
        <taxon>Artiodactyla</taxon>
        <taxon>Ruminantia</taxon>
        <taxon>Pecora</taxon>
        <taxon>Bovidae</taxon>
        <taxon>Caprinae</taxon>
        <taxon>Ovis</taxon>
    </lineage>
</organism>
<keyword id="KW-0007">Acetylation</keyword>
<keyword id="KW-0049">Antioxidant</keyword>
<keyword id="KW-0186">Copper</keyword>
<keyword id="KW-0963">Cytoplasm</keyword>
<keyword id="KW-0903">Direct protein sequencing</keyword>
<keyword id="KW-1015">Disulfide bond</keyword>
<keyword id="KW-0449">Lipoprotein</keyword>
<keyword id="KW-0479">Metal-binding</keyword>
<keyword id="KW-0539">Nucleus</keyword>
<keyword id="KW-0560">Oxidoreductase</keyword>
<keyword id="KW-0564">Palmitate</keyword>
<keyword id="KW-0597">Phosphoprotein</keyword>
<keyword id="KW-1185">Reference proteome</keyword>
<keyword id="KW-0862">Zinc</keyword>
<sequence>MATKAVCVLKGDGPVQGTIRFEAKGDKVVVTGSITGLTEGDHGFHVHQFGDNTQGCTSAGPHFNPLSKKHGGPKDEERHVGDLGNVKADKNGVAIVDIVDPLISLSGEYSIIGRTMVVHEKPDDLGRGGNEESTKTGNAGGRLACGVIGIAP</sequence>
<gene>
    <name evidence="2" type="primary">SOD1</name>
</gene>
<comment type="function">
    <text>Destroys radicals which are normally produced within the cells and which are toxic to biological systems.</text>
</comment>
<comment type="catalytic activity">
    <reaction>
        <text>2 superoxide + 2 H(+) = H2O2 + O2</text>
        <dbReference type="Rhea" id="RHEA:20696"/>
        <dbReference type="ChEBI" id="CHEBI:15378"/>
        <dbReference type="ChEBI" id="CHEBI:15379"/>
        <dbReference type="ChEBI" id="CHEBI:16240"/>
        <dbReference type="ChEBI" id="CHEBI:18421"/>
        <dbReference type="EC" id="1.15.1.1"/>
    </reaction>
</comment>
<comment type="cofactor">
    <cofactor evidence="1">
        <name>Cu cation</name>
        <dbReference type="ChEBI" id="CHEBI:23378"/>
    </cofactor>
    <text evidence="1">Binds 1 copper ion per subunit.</text>
</comment>
<comment type="cofactor">
    <cofactor evidence="1">
        <name>Zn(2+)</name>
        <dbReference type="ChEBI" id="CHEBI:29105"/>
    </cofactor>
    <text evidence="1">Binds 1 zinc ion per subunit.</text>
</comment>
<comment type="subunit">
    <text evidence="2 5">Homodimer; non-disulfide-linked (By similarity). Heterodimer with SOD1. The heterodimer CCS:SOD1 interacts with SLC31A1; this heterotrimer is Cu(1+)-mediated and its maintenance is regulated through SOD1 activation (By similarity).</text>
</comment>
<comment type="subcellular location">
    <subcellularLocation>
        <location>Cytoplasm</location>
    </subcellularLocation>
    <subcellularLocation>
        <location evidence="1">Nucleus</location>
    </subcellularLocation>
</comment>
<comment type="PTM">
    <text evidence="1">Palmitoylation helps nuclear targeting and decreases catalytic activity.</text>
</comment>
<comment type="PTM">
    <text evidence="2">Succinylation, adjacent to copper catalytic site, probably inhibits activity. Desuccinylation by SIRT5 enhances activity.</text>
</comment>
<comment type="similarity">
    <text evidence="8">Belongs to the Cu-Zn superoxide dismutase family.</text>
</comment>
<name>SODC_SHEEP</name>
<feature type="initiator methionine" description="Removed" evidence="3 7">
    <location>
        <position position="1"/>
    </location>
</feature>
<feature type="chain" id="PRO_0000164068" description="Superoxide dismutase [Cu-Zn]">
    <location>
        <begin position="2"/>
        <end position="152"/>
    </location>
</feature>
<feature type="region of interest" description="Disordered" evidence="6">
    <location>
        <begin position="53"/>
        <end position="78"/>
    </location>
</feature>
<feature type="binding site" evidence="1">
    <location>
        <position position="45"/>
    </location>
    <ligand>
        <name>Cu cation</name>
        <dbReference type="ChEBI" id="CHEBI:23378"/>
        <note>catalytic</note>
    </ligand>
</feature>
<feature type="binding site" evidence="1">
    <location>
        <position position="47"/>
    </location>
    <ligand>
        <name>Cu cation</name>
        <dbReference type="ChEBI" id="CHEBI:23378"/>
        <note>catalytic</note>
    </ligand>
</feature>
<feature type="binding site" evidence="1">
    <location>
        <position position="62"/>
    </location>
    <ligand>
        <name>Cu cation</name>
        <dbReference type="ChEBI" id="CHEBI:23378"/>
        <note>catalytic</note>
    </ligand>
</feature>
<feature type="binding site" evidence="1">
    <location>
        <position position="62"/>
    </location>
    <ligand>
        <name>Zn(2+)</name>
        <dbReference type="ChEBI" id="CHEBI:29105"/>
        <note>structural</note>
    </ligand>
</feature>
<feature type="binding site" evidence="1">
    <location>
        <position position="70"/>
    </location>
    <ligand>
        <name>Zn(2+)</name>
        <dbReference type="ChEBI" id="CHEBI:29105"/>
        <note>structural</note>
    </ligand>
</feature>
<feature type="binding site" evidence="1">
    <location>
        <position position="79"/>
    </location>
    <ligand>
        <name>Zn(2+)</name>
        <dbReference type="ChEBI" id="CHEBI:29105"/>
        <note>structural</note>
    </ligand>
</feature>
<feature type="binding site" evidence="1">
    <location>
        <position position="82"/>
    </location>
    <ligand>
        <name>Zn(2+)</name>
        <dbReference type="ChEBI" id="CHEBI:29105"/>
        <note>structural</note>
    </ligand>
</feature>
<feature type="binding site" evidence="1">
    <location>
        <position position="119"/>
    </location>
    <ligand>
        <name>Cu cation</name>
        <dbReference type="ChEBI" id="CHEBI:23378"/>
        <note>catalytic</note>
    </ligand>
</feature>
<feature type="modified residue" description="N-acetylalanine" evidence="3">
    <location>
        <position position="2"/>
    </location>
</feature>
<feature type="modified residue" description="N6-succinyllysine" evidence="5">
    <location>
        <position position="4"/>
    </location>
</feature>
<feature type="modified residue" description="N6-succinyllysine" evidence="5">
    <location>
        <position position="10"/>
    </location>
</feature>
<feature type="modified residue" description="N6-succinyllysine" evidence="5">
    <location>
        <position position="90"/>
    </location>
</feature>
<feature type="modified residue" description="Phosphoserine" evidence="4">
    <location>
        <position position="104"/>
    </location>
</feature>
<feature type="modified residue" description="Phosphoserine" evidence="5">
    <location>
        <position position="106"/>
    </location>
</feature>
<feature type="modified residue" description="N6-acetyllysine; alternate" evidence="2">
    <location>
        <position position="121"/>
    </location>
</feature>
<feature type="modified residue" description="N6-succinyllysine; alternate" evidence="2">
    <location>
        <position position="121"/>
    </location>
</feature>
<feature type="modified residue" description="N6-acetyllysine; alternate" evidence="5">
    <location>
        <position position="135"/>
    </location>
</feature>
<feature type="modified residue" description="N6-succinyllysine; alternate" evidence="5">
    <location>
        <position position="135"/>
    </location>
</feature>
<feature type="lipid moiety-binding region" description="S-palmitoyl cysteine" evidence="1">
    <location>
        <position position="7"/>
    </location>
</feature>
<feature type="disulfide bond">
    <location>
        <begin position="56"/>
        <end position="145"/>
    </location>
</feature>
<protein>
    <recommendedName>
        <fullName evidence="2">Superoxide dismutase [Cu-Zn]</fullName>
        <ecNumber evidence="2">1.15.1.1</ecNumber>
    </recommendedName>
</protein>
<evidence type="ECO:0000250" key="1"/>
<evidence type="ECO:0000250" key="2">
    <source>
        <dbReference type="UniProtKB" id="P00441"/>
    </source>
</evidence>
<evidence type="ECO:0000250" key="3">
    <source>
        <dbReference type="UniProtKB" id="P00442"/>
    </source>
</evidence>
<evidence type="ECO:0000250" key="4">
    <source>
        <dbReference type="UniProtKB" id="P07632"/>
    </source>
</evidence>
<evidence type="ECO:0000250" key="5">
    <source>
        <dbReference type="UniProtKB" id="P08228"/>
    </source>
</evidence>
<evidence type="ECO:0000256" key="6">
    <source>
        <dbReference type="SAM" id="MobiDB-lite"/>
    </source>
</evidence>
<evidence type="ECO:0000269" key="7">
    <source>
    </source>
</evidence>
<evidence type="ECO:0000305" key="8"/>
<proteinExistence type="evidence at protein level"/>
<accession>P09670</accession>
<dbReference type="EC" id="1.15.1.1" evidence="2"/>
<dbReference type="PIR" id="A24475">
    <property type="entry name" value="A24475"/>
</dbReference>
<dbReference type="SMR" id="P09670"/>
<dbReference type="STRING" id="9940.ENSOARP00000004609"/>
<dbReference type="PaxDb" id="9940-ENSOARP00000004609"/>
<dbReference type="Ensembl" id="ENSOART00180016242">
    <property type="protein sequence ID" value="ENSOARP00180008266"/>
    <property type="gene ID" value="ENSOARG00180009881"/>
</dbReference>
<dbReference type="Ensembl" id="ENSOART00185013505">
    <property type="protein sequence ID" value="ENSOARP00185006367"/>
    <property type="gene ID" value="ENSOARG00185008488"/>
</dbReference>
<dbReference type="Ensembl" id="ENSOART00225065601">
    <property type="protein sequence ID" value="ENSOARP00225033015"/>
    <property type="gene ID" value="ENSOARG00225039631"/>
</dbReference>
<dbReference type="eggNOG" id="KOG0441">
    <property type="taxonomic scope" value="Eukaryota"/>
</dbReference>
<dbReference type="HOGENOM" id="CLU_056632_4_1_1"/>
<dbReference type="OMA" id="AQRGFHI"/>
<dbReference type="Proteomes" id="UP000002356">
    <property type="component" value="Chromosome 1"/>
</dbReference>
<dbReference type="Proteomes" id="UP000002356">
    <property type="component" value="Chromosome 11"/>
</dbReference>
<dbReference type="Bgee" id="ENSOARG00000004311">
    <property type="expression patterns" value="Expressed in adult mammalian kidney and 56 other cell types or tissues"/>
</dbReference>
<dbReference type="GO" id="GO:1904115">
    <property type="term" value="C:axon cytoplasm"/>
    <property type="evidence" value="ECO:0007669"/>
    <property type="project" value="GOC"/>
</dbReference>
<dbReference type="GO" id="GO:0031410">
    <property type="term" value="C:cytoplasmic vesicle"/>
    <property type="evidence" value="ECO:0007669"/>
    <property type="project" value="Ensembl"/>
</dbReference>
<dbReference type="GO" id="GO:0005829">
    <property type="term" value="C:cytosol"/>
    <property type="evidence" value="ECO:0007669"/>
    <property type="project" value="Ensembl"/>
</dbReference>
<dbReference type="GO" id="GO:0032839">
    <property type="term" value="C:dendrite cytoplasm"/>
    <property type="evidence" value="ECO:0007669"/>
    <property type="project" value="Ensembl"/>
</dbReference>
<dbReference type="GO" id="GO:0005615">
    <property type="term" value="C:extracellular space"/>
    <property type="evidence" value="ECO:0007669"/>
    <property type="project" value="Ensembl"/>
</dbReference>
<dbReference type="GO" id="GO:0005739">
    <property type="term" value="C:mitochondrion"/>
    <property type="evidence" value="ECO:0007669"/>
    <property type="project" value="Ensembl"/>
</dbReference>
<dbReference type="GO" id="GO:0043025">
    <property type="term" value="C:neuronal cell body"/>
    <property type="evidence" value="ECO:0007669"/>
    <property type="project" value="Ensembl"/>
</dbReference>
<dbReference type="GO" id="GO:0005654">
    <property type="term" value="C:nucleoplasm"/>
    <property type="evidence" value="ECO:0007669"/>
    <property type="project" value="Ensembl"/>
</dbReference>
<dbReference type="GO" id="GO:0005777">
    <property type="term" value="C:peroxisome"/>
    <property type="evidence" value="ECO:0007669"/>
    <property type="project" value="Ensembl"/>
</dbReference>
<dbReference type="GO" id="GO:0005886">
    <property type="term" value="C:plasma membrane"/>
    <property type="evidence" value="ECO:0007669"/>
    <property type="project" value="Ensembl"/>
</dbReference>
<dbReference type="GO" id="GO:0032991">
    <property type="term" value="C:protein-containing complex"/>
    <property type="evidence" value="ECO:0007669"/>
    <property type="project" value="Ensembl"/>
</dbReference>
<dbReference type="GO" id="GO:0005507">
    <property type="term" value="F:copper ion binding"/>
    <property type="evidence" value="ECO:0007669"/>
    <property type="project" value="Ensembl"/>
</dbReference>
<dbReference type="GO" id="GO:0042803">
    <property type="term" value="F:protein homodimerization activity"/>
    <property type="evidence" value="ECO:0007669"/>
    <property type="project" value="Ensembl"/>
</dbReference>
<dbReference type="GO" id="GO:0030346">
    <property type="term" value="F:protein phosphatase 2B binding"/>
    <property type="evidence" value="ECO:0007669"/>
    <property type="project" value="Ensembl"/>
</dbReference>
<dbReference type="GO" id="GO:0051087">
    <property type="term" value="F:protein-folding chaperone binding"/>
    <property type="evidence" value="ECO:0007669"/>
    <property type="project" value="Ensembl"/>
</dbReference>
<dbReference type="GO" id="GO:0031267">
    <property type="term" value="F:small GTPase binding"/>
    <property type="evidence" value="ECO:0007669"/>
    <property type="project" value="Ensembl"/>
</dbReference>
<dbReference type="GO" id="GO:0004784">
    <property type="term" value="F:superoxide dismutase activity"/>
    <property type="evidence" value="ECO:0000250"/>
    <property type="project" value="UniProtKB"/>
</dbReference>
<dbReference type="GO" id="GO:0008270">
    <property type="term" value="F:zinc ion binding"/>
    <property type="evidence" value="ECO:0007669"/>
    <property type="project" value="Ensembl"/>
</dbReference>
<dbReference type="GO" id="GO:0099610">
    <property type="term" value="P:action potential initiation"/>
    <property type="evidence" value="ECO:0007669"/>
    <property type="project" value="Ensembl"/>
</dbReference>
<dbReference type="GO" id="GO:0008089">
    <property type="term" value="P:anterograde axonal transport"/>
    <property type="evidence" value="ECO:0007669"/>
    <property type="project" value="Ensembl"/>
</dbReference>
<dbReference type="GO" id="GO:0006915">
    <property type="term" value="P:apoptotic process"/>
    <property type="evidence" value="ECO:0007669"/>
    <property type="project" value="Ensembl"/>
</dbReference>
<dbReference type="GO" id="GO:0060088">
    <property type="term" value="P:auditory receptor cell stereocilium organization"/>
    <property type="evidence" value="ECO:0007669"/>
    <property type="project" value="Ensembl"/>
</dbReference>
<dbReference type="GO" id="GO:0008340">
    <property type="term" value="P:determination of adult lifespan"/>
    <property type="evidence" value="ECO:0007669"/>
    <property type="project" value="Ensembl"/>
</dbReference>
<dbReference type="GO" id="GO:0035234">
    <property type="term" value="P:ectopic germ cell programmed cell death"/>
    <property type="evidence" value="ECO:0007669"/>
    <property type="project" value="Ensembl"/>
</dbReference>
<dbReference type="GO" id="GO:0007566">
    <property type="term" value="P:embryo implantation"/>
    <property type="evidence" value="ECO:0007669"/>
    <property type="project" value="Ensembl"/>
</dbReference>
<dbReference type="GO" id="GO:0010467">
    <property type="term" value="P:gene expression"/>
    <property type="evidence" value="ECO:0007669"/>
    <property type="project" value="Ensembl"/>
</dbReference>
<dbReference type="GO" id="GO:0006749">
    <property type="term" value="P:glutathione metabolic process"/>
    <property type="evidence" value="ECO:0007669"/>
    <property type="project" value="Ensembl"/>
</dbReference>
<dbReference type="GO" id="GO:0060047">
    <property type="term" value="P:heart contraction"/>
    <property type="evidence" value="ECO:0007669"/>
    <property type="project" value="Ensembl"/>
</dbReference>
<dbReference type="GO" id="GO:0050665">
    <property type="term" value="P:hydrogen peroxide biosynthetic process"/>
    <property type="evidence" value="ECO:0007669"/>
    <property type="project" value="Ensembl"/>
</dbReference>
<dbReference type="GO" id="GO:0006879">
    <property type="term" value="P:intracellular iron ion homeostasis"/>
    <property type="evidence" value="ECO:0007669"/>
    <property type="project" value="Ensembl"/>
</dbReference>
<dbReference type="GO" id="GO:0007626">
    <property type="term" value="P:locomotory behavior"/>
    <property type="evidence" value="ECO:0007669"/>
    <property type="project" value="Ensembl"/>
</dbReference>
<dbReference type="GO" id="GO:0046716">
    <property type="term" value="P:muscle cell cellular homeostasis"/>
    <property type="evidence" value="ECO:0007669"/>
    <property type="project" value="Ensembl"/>
</dbReference>
<dbReference type="GO" id="GO:0002262">
    <property type="term" value="P:myeloid cell homeostasis"/>
    <property type="evidence" value="ECO:0007669"/>
    <property type="project" value="Ensembl"/>
</dbReference>
<dbReference type="GO" id="GO:0051093">
    <property type="term" value="P:negative regulation of developmental process"/>
    <property type="evidence" value="ECO:0007669"/>
    <property type="project" value="Ensembl"/>
</dbReference>
<dbReference type="GO" id="GO:0050728">
    <property type="term" value="P:negative regulation of inflammatory response"/>
    <property type="evidence" value="ECO:0007669"/>
    <property type="project" value="Ensembl"/>
</dbReference>
<dbReference type="GO" id="GO:0043524">
    <property type="term" value="P:negative regulation of neuron apoptotic process"/>
    <property type="evidence" value="ECO:0007669"/>
    <property type="project" value="Ensembl"/>
</dbReference>
<dbReference type="GO" id="GO:2000242">
    <property type="term" value="P:negative regulation of reproductive process"/>
    <property type="evidence" value="ECO:0007669"/>
    <property type="project" value="Ensembl"/>
</dbReference>
<dbReference type="GO" id="GO:0060052">
    <property type="term" value="P:neurofilament cytoskeleton organization"/>
    <property type="evidence" value="ECO:0007669"/>
    <property type="project" value="Ensembl"/>
</dbReference>
<dbReference type="GO" id="GO:0019228">
    <property type="term" value="P:neuronal action potential"/>
    <property type="evidence" value="ECO:0007669"/>
    <property type="project" value="Ensembl"/>
</dbReference>
<dbReference type="GO" id="GO:0001541">
    <property type="term" value="P:ovarian follicle development"/>
    <property type="evidence" value="ECO:0007669"/>
    <property type="project" value="Ensembl"/>
</dbReference>
<dbReference type="GO" id="GO:0032287">
    <property type="term" value="P:peripheral nervous system myelin maintenance"/>
    <property type="evidence" value="ECO:0007669"/>
    <property type="project" value="Ensembl"/>
</dbReference>
<dbReference type="GO" id="GO:0001819">
    <property type="term" value="P:positive regulation of cytokine production"/>
    <property type="evidence" value="ECO:0007669"/>
    <property type="project" value="Ensembl"/>
</dbReference>
<dbReference type="GO" id="GO:0043410">
    <property type="term" value="P:positive regulation of MAPK cascade"/>
    <property type="evidence" value="ECO:0007669"/>
    <property type="project" value="Ensembl"/>
</dbReference>
<dbReference type="GO" id="GO:1902177">
    <property type="term" value="P:positive regulation of oxidative stress-induced intrinsic apoptotic signaling pathway"/>
    <property type="evidence" value="ECO:0007669"/>
    <property type="project" value="Ensembl"/>
</dbReference>
<dbReference type="GO" id="GO:0050766">
    <property type="term" value="P:positive regulation of phagocytosis"/>
    <property type="evidence" value="ECO:0007669"/>
    <property type="project" value="Ensembl"/>
</dbReference>
<dbReference type="GO" id="GO:0032930">
    <property type="term" value="P:positive regulation of superoxide anion generation"/>
    <property type="evidence" value="ECO:0007669"/>
    <property type="project" value="Ensembl"/>
</dbReference>
<dbReference type="GO" id="GO:0072593">
    <property type="term" value="P:reactive oxygen species metabolic process"/>
    <property type="evidence" value="ECO:0000250"/>
    <property type="project" value="UniProtKB"/>
</dbReference>
<dbReference type="GO" id="GO:0008217">
    <property type="term" value="P:regulation of blood pressure"/>
    <property type="evidence" value="ECO:0007669"/>
    <property type="project" value="Ensembl"/>
</dbReference>
<dbReference type="GO" id="GO:0051881">
    <property type="term" value="P:regulation of mitochondrial membrane potential"/>
    <property type="evidence" value="ECO:0007669"/>
    <property type="project" value="Ensembl"/>
</dbReference>
<dbReference type="GO" id="GO:0040014">
    <property type="term" value="P:regulation of multicellular organism growth"/>
    <property type="evidence" value="ECO:0007669"/>
    <property type="project" value="Ensembl"/>
</dbReference>
<dbReference type="GO" id="GO:0060087">
    <property type="term" value="P:relaxation of vascular associated smooth muscle"/>
    <property type="evidence" value="ECO:0007669"/>
    <property type="project" value="Ensembl"/>
</dbReference>
<dbReference type="GO" id="GO:0019430">
    <property type="term" value="P:removal of superoxide radicals"/>
    <property type="evidence" value="ECO:0000250"/>
    <property type="project" value="UniProtKB"/>
</dbReference>
<dbReference type="GO" id="GO:0048678">
    <property type="term" value="P:response to axon injury"/>
    <property type="evidence" value="ECO:0007669"/>
    <property type="project" value="Ensembl"/>
</dbReference>
<dbReference type="GO" id="GO:0045471">
    <property type="term" value="P:response to ethanol"/>
    <property type="evidence" value="ECO:0007669"/>
    <property type="project" value="Ensembl"/>
</dbReference>
<dbReference type="GO" id="GO:0009408">
    <property type="term" value="P:response to heat"/>
    <property type="evidence" value="ECO:0007669"/>
    <property type="project" value="Ensembl"/>
</dbReference>
<dbReference type="GO" id="GO:0042542">
    <property type="term" value="P:response to hydrogen peroxide"/>
    <property type="evidence" value="ECO:0007669"/>
    <property type="project" value="Ensembl"/>
</dbReference>
<dbReference type="GO" id="GO:0009410">
    <property type="term" value="P:response to xenobiotic stimulus"/>
    <property type="evidence" value="ECO:0007669"/>
    <property type="project" value="Ensembl"/>
</dbReference>
<dbReference type="GO" id="GO:0001895">
    <property type="term" value="P:retina homeostasis"/>
    <property type="evidence" value="ECO:0007669"/>
    <property type="project" value="Ensembl"/>
</dbReference>
<dbReference type="GO" id="GO:0008090">
    <property type="term" value="P:retrograde axonal transport"/>
    <property type="evidence" value="ECO:0007669"/>
    <property type="project" value="Ensembl"/>
</dbReference>
<dbReference type="GO" id="GO:0007605">
    <property type="term" value="P:sensory perception of sound"/>
    <property type="evidence" value="ECO:0007669"/>
    <property type="project" value="Ensembl"/>
</dbReference>
<dbReference type="GO" id="GO:0007283">
    <property type="term" value="P:spermatogenesis"/>
    <property type="evidence" value="ECO:0007669"/>
    <property type="project" value="Ensembl"/>
</dbReference>
<dbReference type="GO" id="GO:0042554">
    <property type="term" value="P:superoxide anion generation"/>
    <property type="evidence" value="ECO:0007669"/>
    <property type="project" value="Ensembl"/>
</dbReference>
<dbReference type="CDD" id="cd00305">
    <property type="entry name" value="Cu-Zn_Superoxide_Dismutase"/>
    <property type="match status" value="1"/>
</dbReference>
<dbReference type="FunFam" id="2.60.40.200:FF:000001">
    <property type="entry name" value="Superoxide dismutase [Cu-Zn]"/>
    <property type="match status" value="1"/>
</dbReference>
<dbReference type="Gene3D" id="2.60.40.200">
    <property type="entry name" value="Superoxide dismutase, copper/zinc binding domain"/>
    <property type="match status" value="1"/>
</dbReference>
<dbReference type="InterPro" id="IPR036423">
    <property type="entry name" value="SOD-like_Cu/Zn_dom_sf"/>
</dbReference>
<dbReference type="InterPro" id="IPR024134">
    <property type="entry name" value="SOD_Cu/Zn_/chaperone"/>
</dbReference>
<dbReference type="InterPro" id="IPR018152">
    <property type="entry name" value="SOD_Cu/Zn_BS"/>
</dbReference>
<dbReference type="InterPro" id="IPR001424">
    <property type="entry name" value="SOD_Cu_Zn_dom"/>
</dbReference>
<dbReference type="PANTHER" id="PTHR10003">
    <property type="entry name" value="SUPEROXIDE DISMUTASE CU-ZN -RELATED"/>
    <property type="match status" value="1"/>
</dbReference>
<dbReference type="Pfam" id="PF00080">
    <property type="entry name" value="Sod_Cu"/>
    <property type="match status" value="1"/>
</dbReference>
<dbReference type="PRINTS" id="PR00068">
    <property type="entry name" value="CUZNDISMTASE"/>
</dbReference>
<dbReference type="SUPFAM" id="SSF49329">
    <property type="entry name" value="Cu,Zn superoxide dismutase-like"/>
    <property type="match status" value="1"/>
</dbReference>
<dbReference type="PROSITE" id="PS00087">
    <property type="entry name" value="SOD_CU_ZN_1"/>
    <property type="match status" value="1"/>
</dbReference>
<dbReference type="PROSITE" id="PS00332">
    <property type="entry name" value="SOD_CU_ZN_2"/>
    <property type="match status" value="1"/>
</dbReference>
<reference key="1">
    <citation type="journal article" date="1986" name="FEBS Lett.">
        <title>Primary structure of a cationic Cu,Zn superoxide dismutase. The sheep enzyme.</title>
        <authorList>
            <person name="Schinina M.E."/>
            <person name="Barra D."/>
            <person name="Gentilomo S."/>
            <person name="Bossa F."/>
            <person name="Capo C."/>
            <person name="Rotilio G."/>
            <person name="Calabrese L."/>
        </authorList>
    </citation>
    <scope>PROTEIN SEQUENCE OF 2-152</scope>
</reference>